<comment type="function">
    <text evidence="1">Transcriptional repressor of the nikABCDE operon. Is active in the presence of excessive concentrations of intracellular nickel (By similarity).</text>
</comment>
<comment type="cofactor">
    <cofactor evidence="1">
        <name>Ni(2+)</name>
        <dbReference type="ChEBI" id="CHEBI:49786"/>
    </cofactor>
    <text evidence="1">Binds 1 nickel ion per subunit.</text>
</comment>
<comment type="subunit">
    <text evidence="1">Homotetramer.</text>
</comment>
<comment type="similarity">
    <text evidence="2">Belongs to the transcriptional regulatory CopG/NikR family.</text>
</comment>
<reference key="1">
    <citation type="journal article" date="2002" name="Nucleic Acids Res.">
        <title>Genome sequence of Shigella flexneri 2a: insights into pathogenicity through comparison with genomes of Escherichia coli K12 and O157.</title>
        <authorList>
            <person name="Jin Q."/>
            <person name="Yuan Z."/>
            <person name="Xu J."/>
            <person name="Wang Y."/>
            <person name="Shen Y."/>
            <person name="Lu W."/>
            <person name="Wang J."/>
            <person name="Liu H."/>
            <person name="Yang J."/>
            <person name="Yang F."/>
            <person name="Zhang X."/>
            <person name="Zhang J."/>
            <person name="Yang G."/>
            <person name="Wu H."/>
            <person name="Qu D."/>
            <person name="Dong J."/>
            <person name="Sun L."/>
            <person name="Xue Y."/>
            <person name="Zhao A."/>
            <person name="Gao Y."/>
            <person name="Zhu J."/>
            <person name="Kan B."/>
            <person name="Ding K."/>
            <person name="Chen S."/>
            <person name="Cheng H."/>
            <person name="Yao Z."/>
            <person name="He B."/>
            <person name="Chen R."/>
            <person name="Ma D."/>
            <person name="Qiang B."/>
            <person name="Wen Y."/>
            <person name="Hou Y."/>
            <person name="Yu J."/>
        </authorList>
    </citation>
    <scope>NUCLEOTIDE SEQUENCE [LARGE SCALE GENOMIC DNA]</scope>
    <source>
        <strain>301 / Serotype 2a</strain>
    </source>
</reference>
<reference key="2">
    <citation type="journal article" date="2003" name="Infect. Immun.">
        <title>Complete genome sequence and comparative genomics of Shigella flexneri serotype 2a strain 2457T.</title>
        <authorList>
            <person name="Wei J."/>
            <person name="Goldberg M.B."/>
            <person name="Burland V."/>
            <person name="Venkatesan M.M."/>
            <person name="Deng W."/>
            <person name="Fournier G."/>
            <person name="Mayhew G.F."/>
            <person name="Plunkett G. III"/>
            <person name="Rose D.J."/>
            <person name="Darling A."/>
            <person name="Mau B."/>
            <person name="Perna N.T."/>
            <person name="Payne S.M."/>
            <person name="Runyen-Janecky L.J."/>
            <person name="Zhou S."/>
            <person name="Schwartz D.C."/>
            <person name="Blattner F.R."/>
        </authorList>
    </citation>
    <scope>NUCLEOTIDE SEQUENCE [LARGE SCALE GENOMIC DNA]</scope>
    <source>
        <strain>ATCC 700930 / 2457T / Serotype 2a</strain>
    </source>
</reference>
<protein>
    <recommendedName>
        <fullName>Nickel-responsive regulator</fullName>
    </recommendedName>
</protein>
<dbReference type="EMBL" id="AE005674">
    <property type="protein sequence ID" value="AAN44958.1"/>
    <property type="molecule type" value="Genomic_DNA"/>
</dbReference>
<dbReference type="EMBL" id="AE014073">
    <property type="protein sequence ID" value="AAP19224.1"/>
    <property type="molecule type" value="Genomic_DNA"/>
</dbReference>
<dbReference type="RefSeq" id="WP_001190062.1">
    <property type="nucleotide sequence ID" value="NZ_WPGW01000010.1"/>
</dbReference>
<dbReference type="SMR" id="P0A6Z9"/>
<dbReference type="STRING" id="198214.SF3499"/>
<dbReference type="PaxDb" id="198214-SF3499"/>
<dbReference type="GeneID" id="93778510"/>
<dbReference type="KEGG" id="sfl:SF3499"/>
<dbReference type="KEGG" id="sfx:S4264"/>
<dbReference type="PATRIC" id="fig|198214.7.peg.4120"/>
<dbReference type="HOGENOM" id="CLU_113319_1_4_6"/>
<dbReference type="Proteomes" id="UP000001006">
    <property type="component" value="Chromosome"/>
</dbReference>
<dbReference type="Proteomes" id="UP000002673">
    <property type="component" value="Chromosome"/>
</dbReference>
<dbReference type="GO" id="GO:0003700">
    <property type="term" value="F:DNA-binding transcription factor activity"/>
    <property type="evidence" value="ECO:0007669"/>
    <property type="project" value="UniProtKB-UniRule"/>
</dbReference>
<dbReference type="GO" id="GO:0016151">
    <property type="term" value="F:nickel cation binding"/>
    <property type="evidence" value="ECO:0007669"/>
    <property type="project" value="UniProtKB-UniRule"/>
</dbReference>
<dbReference type="GO" id="GO:0043565">
    <property type="term" value="F:sequence-specific DNA binding"/>
    <property type="evidence" value="ECO:0007669"/>
    <property type="project" value="UniProtKB-ARBA"/>
</dbReference>
<dbReference type="GO" id="GO:0010045">
    <property type="term" value="P:response to nickel cation"/>
    <property type="evidence" value="ECO:0007669"/>
    <property type="project" value="InterPro"/>
</dbReference>
<dbReference type="CDD" id="cd22231">
    <property type="entry name" value="RHH_NikR_HicB-like"/>
    <property type="match status" value="1"/>
</dbReference>
<dbReference type="FunFam" id="1.10.1220.10:FF:000001">
    <property type="entry name" value="Nickel-responsive regulator"/>
    <property type="match status" value="1"/>
</dbReference>
<dbReference type="FunFam" id="3.30.70.1150:FF:000002">
    <property type="entry name" value="Nickel-responsive regulator"/>
    <property type="match status" value="1"/>
</dbReference>
<dbReference type="Gene3D" id="3.30.70.1150">
    <property type="entry name" value="ACT-like. Chain A, domain 2"/>
    <property type="match status" value="1"/>
</dbReference>
<dbReference type="Gene3D" id="1.10.1220.10">
    <property type="entry name" value="Met repressor-like"/>
    <property type="match status" value="1"/>
</dbReference>
<dbReference type="HAMAP" id="MF_00476">
    <property type="entry name" value="NikR"/>
    <property type="match status" value="1"/>
</dbReference>
<dbReference type="InterPro" id="IPR027271">
    <property type="entry name" value="Acetolactate_synth/TF_NikR_C"/>
</dbReference>
<dbReference type="InterPro" id="IPR045865">
    <property type="entry name" value="ACT-like_dom_sf"/>
</dbReference>
<dbReference type="InterPro" id="IPR013321">
    <property type="entry name" value="Arc_rbn_hlx_hlx"/>
</dbReference>
<dbReference type="InterPro" id="IPR002145">
    <property type="entry name" value="CopG"/>
</dbReference>
<dbReference type="InterPro" id="IPR050192">
    <property type="entry name" value="CopG/NikR_regulator"/>
</dbReference>
<dbReference type="InterPro" id="IPR022988">
    <property type="entry name" value="Ni_resp_reg_NikR"/>
</dbReference>
<dbReference type="InterPro" id="IPR014160">
    <property type="entry name" value="Nickel_NikR_proteobac"/>
</dbReference>
<dbReference type="InterPro" id="IPR010985">
    <property type="entry name" value="Ribbon_hlx_hlx"/>
</dbReference>
<dbReference type="InterPro" id="IPR014864">
    <property type="entry name" value="TF_NikR_Ni-bd_C"/>
</dbReference>
<dbReference type="NCBIfam" id="TIGR02793">
    <property type="entry name" value="nikR"/>
    <property type="match status" value="1"/>
</dbReference>
<dbReference type="NCBIfam" id="NF002815">
    <property type="entry name" value="PRK02967.1"/>
    <property type="match status" value="1"/>
</dbReference>
<dbReference type="NCBIfam" id="NF003381">
    <property type="entry name" value="PRK04460.1"/>
    <property type="match status" value="1"/>
</dbReference>
<dbReference type="PANTHER" id="PTHR34719">
    <property type="entry name" value="NICKEL-RESPONSIVE REGULATOR"/>
    <property type="match status" value="1"/>
</dbReference>
<dbReference type="PANTHER" id="PTHR34719:SF2">
    <property type="entry name" value="NICKEL-RESPONSIVE REGULATOR"/>
    <property type="match status" value="1"/>
</dbReference>
<dbReference type="Pfam" id="PF08753">
    <property type="entry name" value="NikR_C"/>
    <property type="match status" value="1"/>
</dbReference>
<dbReference type="Pfam" id="PF01402">
    <property type="entry name" value="RHH_1"/>
    <property type="match status" value="1"/>
</dbReference>
<dbReference type="SUPFAM" id="SSF55021">
    <property type="entry name" value="ACT-like"/>
    <property type="match status" value="1"/>
</dbReference>
<dbReference type="SUPFAM" id="SSF47598">
    <property type="entry name" value="Ribbon-helix-helix"/>
    <property type="match status" value="1"/>
</dbReference>
<sequence>MQRVTITLDDDLLETLDSLSQRRGYNNRSEAIRDILRSALAQEATQQHGTQGFAVLSYVYEHEKRDLASRIVSTQHHHHDLSVATLHVHINHDDCLEIAVLKGDMGDVQHFADDVIAQRGVRHGHLQCLPKED</sequence>
<organism>
    <name type="scientific">Shigella flexneri</name>
    <dbReference type="NCBI Taxonomy" id="623"/>
    <lineage>
        <taxon>Bacteria</taxon>
        <taxon>Pseudomonadati</taxon>
        <taxon>Pseudomonadota</taxon>
        <taxon>Gammaproteobacteria</taxon>
        <taxon>Enterobacterales</taxon>
        <taxon>Enterobacteriaceae</taxon>
        <taxon>Shigella</taxon>
    </lineage>
</organism>
<gene>
    <name type="primary">nikR</name>
    <name type="ordered locus">SF3499</name>
    <name type="ordered locus">S4264</name>
</gene>
<keyword id="KW-0238">DNA-binding</keyword>
<keyword id="KW-0479">Metal-binding</keyword>
<keyword id="KW-0533">Nickel</keyword>
<keyword id="KW-1185">Reference proteome</keyword>
<keyword id="KW-0678">Repressor</keyword>
<keyword id="KW-0804">Transcription</keyword>
<keyword id="KW-0805">Transcription regulation</keyword>
<feature type="chain" id="PRO_0000139281" description="Nickel-responsive regulator">
    <location>
        <begin position="1"/>
        <end position="133"/>
    </location>
</feature>
<feature type="binding site" evidence="1">
    <location>
        <position position="76"/>
    </location>
    <ligand>
        <name>Ni(2+)</name>
        <dbReference type="ChEBI" id="CHEBI:49786"/>
    </ligand>
</feature>
<feature type="binding site" evidence="1">
    <location>
        <position position="87"/>
    </location>
    <ligand>
        <name>Ni(2+)</name>
        <dbReference type="ChEBI" id="CHEBI:49786"/>
    </ligand>
</feature>
<feature type="binding site" evidence="1">
    <location>
        <position position="89"/>
    </location>
    <ligand>
        <name>Ni(2+)</name>
        <dbReference type="ChEBI" id="CHEBI:49786"/>
    </ligand>
</feature>
<feature type="binding site" evidence="1">
    <location>
        <position position="95"/>
    </location>
    <ligand>
        <name>Ni(2+)</name>
        <dbReference type="ChEBI" id="CHEBI:49786"/>
    </ligand>
</feature>
<accession>P0A6Z9</accession>
<accession>P28910</accession>
<accession>Q47559</accession>
<evidence type="ECO:0000250" key="1"/>
<evidence type="ECO:0000305" key="2"/>
<name>NIKR_SHIFL</name>
<proteinExistence type="inferred from homology"/>